<organism>
    <name type="scientific">Xenopus laevis</name>
    <name type="common">African clawed frog</name>
    <dbReference type="NCBI Taxonomy" id="8355"/>
    <lineage>
        <taxon>Eukaryota</taxon>
        <taxon>Metazoa</taxon>
        <taxon>Chordata</taxon>
        <taxon>Craniata</taxon>
        <taxon>Vertebrata</taxon>
        <taxon>Euteleostomi</taxon>
        <taxon>Amphibia</taxon>
        <taxon>Batrachia</taxon>
        <taxon>Anura</taxon>
        <taxon>Pipoidea</taxon>
        <taxon>Pipidae</taxon>
        <taxon>Xenopodinae</taxon>
        <taxon>Xenopus</taxon>
        <taxon>Xenopus</taxon>
    </lineage>
</organism>
<proteinExistence type="evidence at transcript level"/>
<gene>
    <name type="primary">naa30</name>
    <name type="synonym">mak3</name>
    <name type="synonym">nat12</name>
</gene>
<sequence>MADAPSGPSVLSHYPGAGLAGEQQREEERHKGCHHHQLNGLISPDLRHLKAVSSLKNKLLEQKTRKDSGLVQPQGRTDTRAPNGLERLQGEEEKLSACLASCSLRGDGEALGNHVSQGENDDTIRYVRYESELQMADIMRLITRDLSEPYSIYTYRYFIHNWPQLCFLAMVGEECVGAIVCKLDMHKKMFRRGYIAMLAVDSKYRRKGIGTHLVKKAIYAMVEGDCDEVVLETEITNKSALKLYENLGFVRDKRLFRYYLNGVDALRLKLWLR</sequence>
<protein>
    <recommendedName>
        <fullName>N-alpha-acetyltransferase 30</fullName>
        <ecNumber evidence="1">2.3.1.256</ecNumber>
    </recommendedName>
    <alternativeName>
        <fullName>N-acetyltransferase 12</fullName>
    </alternativeName>
    <alternativeName>
        <fullName>N-acetyltransferase MAK3 homolog</fullName>
    </alternativeName>
    <alternativeName>
        <fullName>NatC catalytic subunit</fullName>
    </alternativeName>
</protein>
<keyword id="KW-0012">Acyltransferase</keyword>
<keyword id="KW-0963">Cytoplasm</keyword>
<keyword id="KW-0539">Nucleus</keyword>
<keyword id="KW-1185">Reference proteome</keyword>
<keyword id="KW-0808">Transferase</keyword>
<feature type="chain" id="PRO_0000320034" description="N-alpha-acetyltransferase 30">
    <location>
        <begin position="1"/>
        <end position="273"/>
    </location>
</feature>
<feature type="domain" description="N-acetyltransferase" evidence="2">
    <location>
        <begin position="125"/>
        <end position="273"/>
    </location>
</feature>
<feature type="region of interest" description="Disordered" evidence="3">
    <location>
        <begin position="1"/>
        <end position="39"/>
    </location>
</feature>
<feature type="region of interest" description="Disordered" evidence="3">
    <location>
        <begin position="62"/>
        <end position="85"/>
    </location>
</feature>
<reference key="1">
    <citation type="submission" date="2006-09" db="EMBL/GenBank/DDBJ databases">
        <authorList>
            <consortium name="NIH - Xenopus Gene Collection (XGC) project"/>
        </authorList>
    </citation>
    <scope>NUCLEOTIDE SEQUENCE [LARGE SCALE MRNA]</scope>
    <source>
        <tissue>Embryo</tissue>
    </source>
</reference>
<dbReference type="EC" id="2.3.1.256" evidence="1"/>
<dbReference type="EMBL" id="BC123156">
    <property type="protein sequence ID" value="AAI23157.1"/>
    <property type="molecule type" value="mRNA"/>
</dbReference>
<dbReference type="RefSeq" id="NP_001090313.1">
    <property type="nucleotide sequence ID" value="NM_001096844.1"/>
</dbReference>
<dbReference type="SMR" id="Q0IHH1"/>
<dbReference type="BioGRID" id="607929">
    <property type="interactions" value="1"/>
</dbReference>
<dbReference type="IntAct" id="Q0IHH1">
    <property type="interactions" value="1"/>
</dbReference>
<dbReference type="DNASU" id="779222"/>
<dbReference type="GeneID" id="779222"/>
<dbReference type="KEGG" id="xla:779222"/>
<dbReference type="AGR" id="Xenbase:XB-GENE-877045"/>
<dbReference type="CTD" id="779222"/>
<dbReference type="Xenbase" id="XB-GENE-877045">
    <property type="gene designation" value="naa30.S"/>
</dbReference>
<dbReference type="OrthoDB" id="249099at2759"/>
<dbReference type="Proteomes" id="UP000186698">
    <property type="component" value="Chromosome 8S"/>
</dbReference>
<dbReference type="Bgee" id="779222">
    <property type="expression patterns" value="Expressed in egg cell and 19 other cell types or tissues"/>
</dbReference>
<dbReference type="GO" id="GO:0005737">
    <property type="term" value="C:cytoplasm"/>
    <property type="evidence" value="ECO:0000250"/>
    <property type="project" value="UniProtKB"/>
</dbReference>
<dbReference type="GO" id="GO:0031417">
    <property type="term" value="C:NatC complex"/>
    <property type="evidence" value="ECO:0000250"/>
    <property type="project" value="UniProtKB"/>
</dbReference>
<dbReference type="GO" id="GO:0005634">
    <property type="term" value="C:nucleus"/>
    <property type="evidence" value="ECO:0000250"/>
    <property type="project" value="UniProtKB"/>
</dbReference>
<dbReference type="GO" id="GO:0120518">
    <property type="term" value="F:protein N-terminal-methionine acetyltransferase activity"/>
    <property type="evidence" value="ECO:0007669"/>
    <property type="project" value="UniProtKB-EC"/>
</dbReference>
<dbReference type="GO" id="GO:0004596">
    <property type="term" value="F:protein-N-terminal amino-acid acetyltransferase activity"/>
    <property type="evidence" value="ECO:0000250"/>
    <property type="project" value="UniProtKB"/>
</dbReference>
<dbReference type="GO" id="GO:0050821">
    <property type="term" value="P:protein stabilization"/>
    <property type="evidence" value="ECO:0000250"/>
    <property type="project" value="UniProtKB"/>
</dbReference>
<dbReference type="CDD" id="cd04301">
    <property type="entry name" value="NAT_SF"/>
    <property type="match status" value="1"/>
</dbReference>
<dbReference type="FunFam" id="3.40.630.30:FF:000010">
    <property type="entry name" value="Putative N-alpha-acetyltransferase 30"/>
    <property type="match status" value="1"/>
</dbReference>
<dbReference type="Gene3D" id="3.40.630.30">
    <property type="match status" value="1"/>
</dbReference>
<dbReference type="InterPro" id="IPR016181">
    <property type="entry name" value="Acyl_CoA_acyltransferase"/>
</dbReference>
<dbReference type="InterPro" id="IPR000182">
    <property type="entry name" value="GNAT_dom"/>
</dbReference>
<dbReference type="InterPro" id="IPR044542">
    <property type="entry name" value="NAA30-like"/>
</dbReference>
<dbReference type="PANTHER" id="PTHR45896">
    <property type="entry name" value="N-ALPHA-ACETYLTRANSFERASE 30"/>
    <property type="match status" value="1"/>
</dbReference>
<dbReference type="PANTHER" id="PTHR45896:SF1">
    <property type="entry name" value="N-ALPHA-ACETYLTRANSFERASE 30"/>
    <property type="match status" value="1"/>
</dbReference>
<dbReference type="Pfam" id="PF00583">
    <property type="entry name" value="Acetyltransf_1"/>
    <property type="match status" value="1"/>
</dbReference>
<dbReference type="SUPFAM" id="SSF55729">
    <property type="entry name" value="Acyl-CoA N-acyltransferases (Nat)"/>
    <property type="match status" value="1"/>
</dbReference>
<dbReference type="PROSITE" id="PS51186">
    <property type="entry name" value="GNAT"/>
    <property type="match status" value="1"/>
</dbReference>
<name>NAA30_XENLA</name>
<evidence type="ECO:0000250" key="1">
    <source>
        <dbReference type="UniProtKB" id="Q147X3"/>
    </source>
</evidence>
<evidence type="ECO:0000255" key="2">
    <source>
        <dbReference type="PROSITE-ProRule" id="PRU00532"/>
    </source>
</evidence>
<evidence type="ECO:0000256" key="3">
    <source>
        <dbReference type="SAM" id="MobiDB-lite"/>
    </source>
</evidence>
<evidence type="ECO:0000305" key="4"/>
<comment type="function">
    <text evidence="1">Catalytic subunit of the N-terminal acetyltransferase C (NatC) complex. Catalyzes acetylation of the N-terminal methionine residues of peptides beginning with Met-Leu-Ala and Met-Leu-Gly. N-terminal acetylation protects proteins from ubiquitination and degradation by the N-end rule pathway.</text>
</comment>
<comment type="catalytic activity">
    <reaction evidence="1">
        <text>N-terminal L-methionyl-L-leucyl-[protein] + acetyl-CoA = N-terminal N(alpha)-acetyl-L-methionyl-L-leucyl-[protein] + CoA + H(+)</text>
        <dbReference type="Rhea" id="RHEA:50520"/>
        <dbReference type="Rhea" id="RHEA-COMP:12711"/>
        <dbReference type="Rhea" id="RHEA-COMP:12712"/>
        <dbReference type="ChEBI" id="CHEBI:15378"/>
        <dbReference type="ChEBI" id="CHEBI:57287"/>
        <dbReference type="ChEBI" id="CHEBI:57288"/>
        <dbReference type="ChEBI" id="CHEBI:133377"/>
        <dbReference type="ChEBI" id="CHEBI:133378"/>
        <dbReference type="EC" id="2.3.1.256"/>
    </reaction>
</comment>
<comment type="catalytic activity">
    <reaction evidence="1">
        <text>N-terminal L-methionyl-L-isoleucyl-[protein] + acetyl-CoA = N-terminal N(alpha)-acetyl-L-methionyl-L-isoleucyl-[protein] + CoA + H(+)</text>
        <dbReference type="Rhea" id="RHEA:50524"/>
        <dbReference type="Rhea" id="RHEA-COMP:12713"/>
        <dbReference type="Rhea" id="RHEA-COMP:12714"/>
        <dbReference type="ChEBI" id="CHEBI:15378"/>
        <dbReference type="ChEBI" id="CHEBI:57287"/>
        <dbReference type="ChEBI" id="CHEBI:57288"/>
        <dbReference type="ChEBI" id="CHEBI:133379"/>
        <dbReference type="ChEBI" id="CHEBI:133380"/>
        <dbReference type="EC" id="2.3.1.256"/>
    </reaction>
</comment>
<comment type="catalytic activity">
    <reaction evidence="1">
        <text>N-terminal L-methionyl-L-phenylalanyl-[protein] + acetyl-CoA = N-terminal N(alpha)-acetyl-L-methionyl-L-phenylalanyl-[protein] + CoA + H(+)</text>
        <dbReference type="Rhea" id="RHEA:50528"/>
        <dbReference type="Rhea" id="RHEA-COMP:12715"/>
        <dbReference type="Rhea" id="RHEA-COMP:12716"/>
        <dbReference type="ChEBI" id="CHEBI:15378"/>
        <dbReference type="ChEBI" id="CHEBI:57287"/>
        <dbReference type="ChEBI" id="CHEBI:57288"/>
        <dbReference type="ChEBI" id="CHEBI:133382"/>
        <dbReference type="ChEBI" id="CHEBI:133383"/>
        <dbReference type="EC" id="2.3.1.256"/>
    </reaction>
</comment>
<comment type="catalytic activity">
    <reaction evidence="1">
        <text>N-terminal L-methionyl-L-tryptophyl-[protein] + acetyl-CoA = N-terminal N(alpha)-acetyl-L-methionyl-L-tryptophyl-[protein] + CoA + H(+)</text>
        <dbReference type="Rhea" id="RHEA:50560"/>
        <dbReference type="Rhea" id="RHEA-COMP:12724"/>
        <dbReference type="Rhea" id="RHEA-COMP:12725"/>
        <dbReference type="ChEBI" id="CHEBI:15378"/>
        <dbReference type="ChEBI" id="CHEBI:57287"/>
        <dbReference type="ChEBI" id="CHEBI:57288"/>
        <dbReference type="ChEBI" id="CHEBI:133386"/>
        <dbReference type="ChEBI" id="CHEBI:133387"/>
        <dbReference type="EC" id="2.3.1.256"/>
    </reaction>
</comment>
<comment type="catalytic activity">
    <reaction evidence="1">
        <text>N-terminal L-methionyl-L-tyrosyl-[protein] + acetyl-CoA = N-terminal N(alpha)-acetyl-L-methionyl-L-tyrosyl-[protein] + CoA + H(+)</text>
        <dbReference type="Rhea" id="RHEA:50532"/>
        <dbReference type="Rhea" id="RHEA-COMP:12717"/>
        <dbReference type="Rhea" id="RHEA-COMP:12718"/>
        <dbReference type="ChEBI" id="CHEBI:15378"/>
        <dbReference type="ChEBI" id="CHEBI:57287"/>
        <dbReference type="ChEBI" id="CHEBI:57288"/>
        <dbReference type="ChEBI" id="CHEBI:133384"/>
        <dbReference type="ChEBI" id="CHEBI:133385"/>
        <dbReference type="EC" id="2.3.1.256"/>
    </reaction>
</comment>
<comment type="subunit">
    <text evidence="1">Component of the N-terminal acetyltransferase C (NatC) complex.</text>
</comment>
<comment type="subcellular location">
    <subcellularLocation>
        <location evidence="1">Cytoplasm</location>
    </subcellularLocation>
    <subcellularLocation>
        <location evidence="1">Nucleus</location>
    </subcellularLocation>
</comment>
<comment type="similarity">
    <text evidence="4">Belongs to the acetyltransferase family. MAK3 subfamily.</text>
</comment>
<accession>Q0IHH1</accession>